<evidence type="ECO:0000255" key="1">
    <source>
        <dbReference type="HAMAP-Rule" id="MF_00532"/>
    </source>
</evidence>
<evidence type="ECO:0000256" key="2">
    <source>
        <dbReference type="SAM" id="MobiDB-lite"/>
    </source>
</evidence>
<evidence type="ECO:0000305" key="3"/>
<feature type="chain" id="PRO_1000051308" description="Small ribosomal subunit protein uS9">
    <location>
        <begin position="1"/>
        <end position="158"/>
    </location>
</feature>
<feature type="region of interest" description="Disordered" evidence="2">
    <location>
        <begin position="1"/>
        <end position="29"/>
    </location>
</feature>
<feature type="compositionally biased region" description="Polar residues" evidence="2">
    <location>
        <begin position="1"/>
        <end position="20"/>
    </location>
</feature>
<dbReference type="EMBL" id="CP000283">
    <property type="protein sequence ID" value="ABE39937.1"/>
    <property type="molecule type" value="Genomic_DNA"/>
</dbReference>
<dbReference type="SMR" id="Q136Q2"/>
<dbReference type="STRING" id="316057.RPD_2708"/>
<dbReference type="KEGG" id="rpd:RPD_2708"/>
<dbReference type="eggNOG" id="COG0103">
    <property type="taxonomic scope" value="Bacteria"/>
</dbReference>
<dbReference type="HOGENOM" id="CLU_046483_2_0_5"/>
<dbReference type="BioCyc" id="RPAL316057:RPD_RS13620-MONOMER"/>
<dbReference type="Proteomes" id="UP000001818">
    <property type="component" value="Chromosome"/>
</dbReference>
<dbReference type="GO" id="GO:0022627">
    <property type="term" value="C:cytosolic small ribosomal subunit"/>
    <property type="evidence" value="ECO:0007669"/>
    <property type="project" value="TreeGrafter"/>
</dbReference>
<dbReference type="GO" id="GO:0003723">
    <property type="term" value="F:RNA binding"/>
    <property type="evidence" value="ECO:0007669"/>
    <property type="project" value="TreeGrafter"/>
</dbReference>
<dbReference type="GO" id="GO:0003735">
    <property type="term" value="F:structural constituent of ribosome"/>
    <property type="evidence" value="ECO:0007669"/>
    <property type="project" value="InterPro"/>
</dbReference>
<dbReference type="GO" id="GO:0006412">
    <property type="term" value="P:translation"/>
    <property type="evidence" value="ECO:0007669"/>
    <property type="project" value="UniProtKB-UniRule"/>
</dbReference>
<dbReference type="FunFam" id="3.30.230.10:FF:000034">
    <property type="entry name" value="30S ribosomal protein S9"/>
    <property type="match status" value="1"/>
</dbReference>
<dbReference type="Gene3D" id="3.30.230.10">
    <property type="match status" value="1"/>
</dbReference>
<dbReference type="HAMAP" id="MF_00532_B">
    <property type="entry name" value="Ribosomal_uS9_B"/>
    <property type="match status" value="1"/>
</dbReference>
<dbReference type="InterPro" id="IPR020568">
    <property type="entry name" value="Ribosomal_Su5_D2-typ_SF"/>
</dbReference>
<dbReference type="InterPro" id="IPR000754">
    <property type="entry name" value="Ribosomal_uS9"/>
</dbReference>
<dbReference type="InterPro" id="IPR023035">
    <property type="entry name" value="Ribosomal_uS9_bac/plastid"/>
</dbReference>
<dbReference type="InterPro" id="IPR020574">
    <property type="entry name" value="Ribosomal_uS9_CS"/>
</dbReference>
<dbReference type="InterPro" id="IPR014721">
    <property type="entry name" value="Ribsml_uS5_D2-typ_fold_subgr"/>
</dbReference>
<dbReference type="NCBIfam" id="NF001099">
    <property type="entry name" value="PRK00132.1"/>
    <property type="match status" value="1"/>
</dbReference>
<dbReference type="PANTHER" id="PTHR21569">
    <property type="entry name" value="RIBOSOMAL PROTEIN S9"/>
    <property type="match status" value="1"/>
</dbReference>
<dbReference type="PANTHER" id="PTHR21569:SF1">
    <property type="entry name" value="SMALL RIBOSOMAL SUBUNIT PROTEIN US9M"/>
    <property type="match status" value="1"/>
</dbReference>
<dbReference type="Pfam" id="PF00380">
    <property type="entry name" value="Ribosomal_S9"/>
    <property type="match status" value="1"/>
</dbReference>
<dbReference type="SUPFAM" id="SSF54211">
    <property type="entry name" value="Ribosomal protein S5 domain 2-like"/>
    <property type="match status" value="1"/>
</dbReference>
<dbReference type="PROSITE" id="PS00360">
    <property type="entry name" value="RIBOSOMAL_S9"/>
    <property type="match status" value="1"/>
</dbReference>
<protein>
    <recommendedName>
        <fullName evidence="1">Small ribosomal subunit protein uS9</fullName>
    </recommendedName>
    <alternativeName>
        <fullName evidence="3">30S ribosomal protein S9</fullName>
    </alternativeName>
</protein>
<reference key="1">
    <citation type="submission" date="2006-03" db="EMBL/GenBank/DDBJ databases">
        <title>Complete sequence of Rhodopseudomonas palustris BisB5.</title>
        <authorList>
            <consortium name="US DOE Joint Genome Institute"/>
            <person name="Copeland A."/>
            <person name="Lucas S."/>
            <person name="Lapidus A."/>
            <person name="Barry K."/>
            <person name="Detter J.C."/>
            <person name="Glavina del Rio T."/>
            <person name="Hammon N."/>
            <person name="Israni S."/>
            <person name="Dalin E."/>
            <person name="Tice H."/>
            <person name="Pitluck S."/>
            <person name="Chain P."/>
            <person name="Malfatti S."/>
            <person name="Shin M."/>
            <person name="Vergez L."/>
            <person name="Schmutz J."/>
            <person name="Larimer F."/>
            <person name="Land M."/>
            <person name="Hauser L."/>
            <person name="Pelletier D.A."/>
            <person name="Kyrpides N."/>
            <person name="Lykidis A."/>
            <person name="Oda Y."/>
            <person name="Harwood C.S."/>
            <person name="Richardson P."/>
        </authorList>
    </citation>
    <scope>NUCLEOTIDE SEQUENCE [LARGE SCALE GENOMIC DNA]</scope>
    <source>
        <strain>BisB5</strain>
    </source>
</reference>
<organism>
    <name type="scientific">Rhodopseudomonas palustris (strain BisB5)</name>
    <dbReference type="NCBI Taxonomy" id="316057"/>
    <lineage>
        <taxon>Bacteria</taxon>
        <taxon>Pseudomonadati</taxon>
        <taxon>Pseudomonadota</taxon>
        <taxon>Alphaproteobacteria</taxon>
        <taxon>Hyphomicrobiales</taxon>
        <taxon>Nitrobacteraceae</taxon>
        <taxon>Rhodopseudomonas</taxon>
    </lineage>
</organism>
<proteinExistence type="inferred from homology"/>
<sequence length="158" mass="17329">MSETMQSLDQLSALKTTQPDAPTYTKKVDKQGRAYATGKRKDAVARVWIKPGAGKVTVNAREVEVYFARPVLRMMIQQPLVAAARAGQYDVICTVAGGGLSGQAGAVRHGISKALTNFEPELRGVLKKGGFLTRDSRVVERKKYGKAKARRSFQFSKR</sequence>
<keyword id="KW-0687">Ribonucleoprotein</keyword>
<keyword id="KW-0689">Ribosomal protein</keyword>
<gene>
    <name evidence="1" type="primary">rpsI</name>
    <name type="ordered locus">RPD_2708</name>
</gene>
<accession>Q136Q2</accession>
<comment type="similarity">
    <text evidence="1">Belongs to the universal ribosomal protein uS9 family.</text>
</comment>
<name>RS9_RHOPS</name>